<proteinExistence type="inferred from homology"/>
<feature type="chain" id="PRO_0000247812" description="Cytochrome b">
    <location>
        <begin position="1"/>
        <end position="379"/>
    </location>
</feature>
<feature type="transmembrane region" description="Helical" evidence="2">
    <location>
        <begin position="33"/>
        <end position="53"/>
    </location>
</feature>
<feature type="transmembrane region" description="Helical" evidence="2">
    <location>
        <begin position="77"/>
        <end position="98"/>
    </location>
</feature>
<feature type="transmembrane region" description="Helical" evidence="2">
    <location>
        <begin position="113"/>
        <end position="133"/>
    </location>
</feature>
<feature type="transmembrane region" description="Helical" evidence="2">
    <location>
        <begin position="178"/>
        <end position="198"/>
    </location>
</feature>
<feature type="transmembrane region" description="Helical" evidence="2">
    <location>
        <begin position="226"/>
        <end position="246"/>
    </location>
</feature>
<feature type="transmembrane region" description="Helical" evidence="2">
    <location>
        <begin position="288"/>
        <end position="308"/>
    </location>
</feature>
<feature type="transmembrane region" description="Helical" evidence="2">
    <location>
        <begin position="320"/>
        <end position="340"/>
    </location>
</feature>
<feature type="transmembrane region" description="Helical" evidence="2">
    <location>
        <begin position="347"/>
        <end position="367"/>
    </location>
</feature>
<feature type="binding site" description="axial binding residue" evidence="2">
    <location>
        <position position="83"/>
    </location>
    <ligand>
        <name>heme b</name>
        <dbReference type="ChEBI" id="CHEBI:60344"/>
        <label>b562</label>
    </ligand>
    <ligandPart>
        <name>Fe</name>
        <dbReference type="ChEBI" id="CHEBI:18248"/>
    </ligandPart>
</feature>
<feature type="binding site" description="axial binding residue" evidence="2">
    <location>
        <position position="97"/>
    </location>
    <ligand>
        <name>heme b</name>
        <dbReference type="ChEBI" id="CHEBI:60344"/>
        <label>b566</label>
    </ligand>
    <ligandPart>
        <name>Fe</name>
        <dbReference type="ChEBI" id="CHEBI:18248"/>
    </ligandPart>
</feature>
<feature type="binding site" description="axial binding residue" evidence="2">
    <location>
        <position position="182"/>
    </location>
    <ligand>
        <name>heme b</name>
        <dbReference type="ChEBI" id="CHEBI:60344"/>
        <label>b562</label>
    </ligand>
    <ligandPart>
        <name>Fe</name>
        <dbReference type="ChEBI" id="CHEBI:18248"/>
    </ligandPart>
</feature>
<feature type="binding site" description="axial binding residue" evidence="2">
    <location>
        <position position="196"/>
    </location>
    <ligand>
        <name>heme b</name>
        <dbReference type="ChEBI" id="CHEBI:60344"/>
        <label>b566</label>
    </ligand>
    <ligandPart>
        <name>Fe</name>
        <dbReference type="ChEBI" id="CHEBI:18248"/>
    </ligandPart>
</feature>
<feature type="binding site" evidence="2">
    <location>
        <position position="201"/>
    </location>
    <ligand>
        <name>a ubiquinone</name>
        <dbReference type="ChEBI" id="CHEBI:16389"/>
    </ligand>
</feature>
<protein>
    <recommendedName>
        <fullName>Cytochrome b</fullName>
    </recommendedName>
    <alternativeName>
        <fullName>Complex III subunit 3</fullName>
    </alternativeName>
    <alternativeName>
        <fullName>Complex III subunit III</fullName>
    </alternativeName>
    <alternativeName>
        <fullName>Cytochrome b-c1 complex subunit 3</fullName>
    </alternativeName>
    <alternativeName>
        <fullName>Ubiquinol-cytochrome-c reductase complex cytochrome b subunit</fullName>
    </alternativeName>
</protein>
<gene>
    <name type="primary">MT-CYB</name>
    <name type="synonym">COB</name>
    <name type="synonym">CYTB</name>
    <name type="synonym">MTCYB</name>
</gene>
<organism>
    <name type="scientific">Eubalaena australis</name>
    <name type="common">Southern right whale</name>
    <dbReference type="NCBI Taxonomy" id="160595"/>
    <lineage>
        <taxon>Eukaryota</taxon>
        <taxon>Metazoa</taxon>
        <taxon>Chordata</taxon>
        <taxon>Craniata</taxon>
        <taxon>Vertebrata</taxon>
        <taxon>Euteleostomi</taxon>
        <taxon>Mammalia</taxon>
        <taxon>Eutheria</taxon>
        <taxon>Laurasiatheria</taxon>
        <taxon>Artiodactyla</taxon>
        <taxon>Whippomorpha</taxon>
        <taxon>Cetacea</taxon>
        <taxon>Mysticeti</taxon>
        <taxon>Balaenidae</taxon>
        <taxon>Eubalaena</taxon>
    </lineage>
</organism>
<keyword id="KW-0249">Electron transport</keyword>
<keyword id="KW-0349">Heme</keyword>
<keyword id="KW-0408">Iron</keyword>
<keyword id="KW-0472">Membrane</keyword>
<keyword id="KW-0479">Metal-binding</keyword>
<keyword id="KW-0496">Mitochondrion</keyword>
<keyword id="KW-0999">Mitochondrion inner membrane</keyword>
<keyword id="KW-0679">Respiratory chain</keyword>
<keyword id="KW-0812">Transmembrane</keyword>
<keyword id="KW-1133">Transmembrane helix</keyword>
<keyword id="KW-0813">Transport</keyword>
<keyword id="KW-0830">Ubiquinone</keyword>
<sequence>MTNIRKTHPLMKIINDAFIDLPTPSNISSWWNFGSLLGLCLIMQILTGLFLAMHYTPDTTTAFSSITHICRDVNYGWIIRYLHANGASMFFICLYAHMGRGLYYGSYAFQETWNIGVILLFTVMATAFVGYVLPWGQMSFWGATVITNLLSAIPYIGNTLVEWIWGGFSVDKATLTRFFAFHFILPFIILALAIVHLLFLHETGSNNPTGIPSNMDKIPFHPYYTIKDILGALLLILTLLMLTLFAPDLLGDPDNYTPANPLSTPAHIKPEWYFLFAYAILRSIPNKLGGVLALLLSILILAFIPMLHTSKQRSMMFRPFSQFLFWVLVADLLTLTWIGGQPVEHPYVIVGQFASILYFLLILVLMPTASLIENKLMKW</sequence>
<name>CYB_EUBAS</name>
<dbReference type="EMBL" id="DQ095152">
    <property type="protein sequence ID" value="AAZ05879.1"/>
    <property type="molecule type" value="Genomic_DNA"/>
</dbReference>
<dbReference type="EMBL" id="DQ095153">
    <property type="protein sequence ID" value="AAZ05880.1"/>
    <property type="molecule type" value="Genomic_DNA"/>
</dbReference>
<dbReference type="EMBL" id="AP006473">
    <property type="protein sequence ID" value="BAD91771.1"/>
    <property type="molecule type" value="Genomic_DNA"/>
</dbReference>
<dbReference type="RefSeq" id="YP_220770.1">
    <property type="nucleotide sequence ID" value="NC_006930.1"/>
</dbReference>
<dbReference type="SMR" id="Q598V2"/>
<dbReference type="GeneID" id="3337252"/>
<dbReference type="CTD" id="4519"/>
<dbReference type="GO" id="GO:0005743">
    <property type="term" value="C:mitochondrial inner membrane"/>
    <property type="evidence" value="ECO:0007669"/>
    <property type="project" value="UniProtKB-SubCell"/>
</dbReference>
<dbReference type="GO" id="GO:0045275">
    <property type="term" value="C:respiratory chain complex III"/>
    <property type="evidence" value="ECO:0007669"/>
    <property type="project" value="InterPro"/>
</dbReference>
<dbReference type="GO" id="GO:0046872">
    <property type="term" value="F:metal ion binding"/>
    <property type="evidence" value="ECO:0007669"/>
    <property type="project" value="UniProtKB-KW"/>
</dbReference>
<dbReference type="GO" id="GO:0008121">
    <property type="term" value="F:ubiquinol-cytochrome-c reductase activity"/>
    <property type="evidence" value="ECO:0007669"/>
    <property type="project" value="InterPro"/>
</dbReference>
<dbReference type="GO" id="GO:0006122">
    <property type="term" value="P:mitochondrial electron transport, ubiquinol to cytochrome c"/>
    <property type="evidence" value="ECO:0007669"/>
    <property type="project" value="TreeGrafter"/>
</dbReference>
<dbReference type="CDD" id="cd00290">
    <property type="entry name" value="cytochrome_b_C"/>
    <property type="match status" value="1"/>
</dbReference>
<dbReference type="CDD" id="cd00284">
    <property type="entry name" value="Cytochrome_b_N"/>
    <property type="match status" value="1"/>
</dbReference>
<dbReference type="FunFam" id="1.20.810.10:FF:000002">
    <property type="entry name" value="Cytochrome b"/>
    <property type="match status" value="1"/>
</dbReference>
<dbReference type="Gene3D" id="1.20.810.10">
    <property type="entry name" value="Cytochrome Bc1 Complex, Chain C"/>
    <property type="match status" value="1"/>
</dbReference>
<dbReference type="InterPro" id="IPR005798">
    <property type="entry name" value="Cyt_b/b6_C"/>
</dbReference>
<dbReference type="InterPro" id="IPR036150">
    <property type="entry name" value="Cyt_b/b6_C_sf"/>
</dbReference>
<dbReference type="InterPro" id="IPR005797">
    <property type="entry name" value="Cyt_b/b6_N"/>
</dbReference>
<dbReference type="InterPro" id="IPR027387">
    <property type="entry name" value="Cytb/b6-like_sf"/>
</dbReference>
<dbReference type="InterPro" id="IPR030689">
    <property type="entry name" value="Cytochrome_b"/>
</dbReference>
<dbReference type="InterPro" id="IPR048260">
    <property type="entry name" value="Cytochrome_b_C_euk/bac"/>
</dbReference>
<dbReference type="InterPro" id="IPR048259">
    <property type="entry name" value="Cytochrome_b_N_euk/bac"/>
</dbReference>
<dbReference type="InterPro" id="IPR016174">
    <property type="entry name" value="Di-haem_cyt_TM"/>
</dbReference>
<dbReference type="PANTHER" id="PTHR19271">
    <property type="entry name" value="CYTOCHROME B"/>
    <property type="match status" value="1"/>
</dbReference>
<dbReference type="PANTHER" id="PTHR19271:SF16">
    <property type="entry name" value="CYTOCHROME B"/>
    <property type="match status" value="1"/>
</dbReference>
<dbReference type="Pfam" id="PF00032">
    <property type="entry name" value="Cytochrom_B_C"/>
    <property type="match status" value="1"/>
</dbReference>
<dbReference type="Pfam" id="PF00033">
    <property type="entry name" value="Cytochrome_B"/>
    <property type="match status" value="1"/>
</dbReference>
<dbReference type="PIRSF" id="PIRSF038885">
    <property type="entry name" value="COB"/>
    <property type="match status" value="1"/>
</dbReference>
<dbReference type="SUPFAM" id="SSF81648">
    <property type="entry name" value="a domain/subunit of cytochrome bc1 complex (Ubiquinol-cytochrome c reductase)"/>
    <property type="match status" value="1"/>
</dbReference>
<dbReference type="SUPFAM" id="SSF81342">
    <property type="entry name" value="Transmembrane di-heme cytochromes"/>
    <property type="match status" value="1"/>
</dbReference>
<dbReference type="PROSITE" id="PS51003">
    <property type="entry name" value="CYTB_CTER"/>
    <property type="match status" value="1"/>
</dbReference>
<dbReference type="PROSITE" id="PS51002">
    <property type="entry name" value="CYTB_NTER"/>
    <property type="match status" value="1"/>
</dbReference>
<geneLocation type="mitochondrion"/>
<reference key="1">
    <citation type="journal article" date="2005" name="Mol. Ecol.">
        <title>Population histories of right whales (Cetacea: Eubalaena) inferred from mitochondrial sequence diversities and divergences of their whale lice (Amphipoda: Cyamus).</title>
        <authorList>
            <person name="Kaliszewska Z.A."/>
            <person name="Seger J."/>
            <person name="Rowntree V.J."/>
            <person name="Barco S.G."/>
            <person name="Benegas R."/>
            <person name="Best P.B."/>
            <person name="Brown M.W."/>
            <person name="Brownell R.L. Jr."/>
            <person name="Carribero A."/>
            <person name="Harcourt R."/>
            <person name="Knowlton A.R."/>
            <person name="Marshall-Tilas K."/>
            <person name="Patenaude N.J."/>
            <person name="Rivarola M."/>
            <person name="Schaeff C.M."/>
            <person name="Sironi M."/>
            <person name="Smith W.A."/>
            <person name="Yamada T.K."/>
        </authorList>
    </citation>
    <scope>NUCLEOTIDE SEQUENCE [GENOMIC DNA]</scope>
    <source>
        <strain>Isolate EA123</strain>
        <strain>Isolate EA604</strain>
    </source>
</reference>
<reference key="2">
    <citation type="journal article" date="2005" name="Syst. Biol.">
        <title>Mitochondrial phylogenetics and evolution of mysticete whales.</title>
        <authorList>
            <person name="Sasaki T."/>
            <person name="Nikaido M."/>
            <person name="Hamilton H."/>
            <person name="Goto M."/>
            <person name="Kato H."/>
            <person name="Kanda N."/>
            <person name="Pastene L.A."/>
            <person name="Cao Y."/>
            <person name="Fordyce R.E."/>
            <person name="Hasegawa M."/>
            <person name="Okada N."/>
        </authorList>
    </citation>
    <scope>NUCLEOTIDE SEQUENCE [GENOMIC DNA]</scope>
</reference>
<evidence type="ECO:0000250" key="1"/>
<evidence type="ECO:0000250" key="2">
    <source>
        <dbReference type="UniProtKB" id="P00157"/>
    </source>
</evidence>
<evidence type="ECO:0000255" key="3">
    <source>
        <dbReference type="PROSITE-ProRule" id="PRU00967"/>
    </source>
</evidence>
<evidence type="ECO:0000255" key="4">
    <source>
        <dbReference type="PROSITE-ProRule" id="PRU00968"/>
    </source>
</evidence>
<accession>Q598V2</accession>
<comment type="function">
    <text evidence="2">Component of the ubiquinol-cytochrome c reductase complex (complex III or cytochrome b-c1 complex) that is part of the mitochondrial respiratory chain. The b-c1 complex mediates electron transfer from ubiquinol to cytochrome c. Contributes to the generation of a proton gradient across the mitochondrial membrane that is then used for ATP synthesis.</text>
</comment>
<comment type="cofactor">
    <cofactor evidence="2">
        <name>heme b</name>
        <dbReference type="ChEBI" id="CHEBI:60344"/>
    </cofactor>
    <text evidence="2">Binds 2 heme b groups non-covalently.</text>
</comment>
<comment type="subunit">
    <text evidence="2">The cytochrome bc1 complex contains 11 subunits: 3 respiratory subunits (MT-CYB, CYC1 and UQCRFS1), 2 core proteins (UQCRC1 and UQCRC2) and 6 low-molecular weight proteins (UQCRH/QCR6, UQCRB/QCR7, UQCRQ/QCR8, UQCR10/QCR9, UQCR11/QCR10 and a cleavage product of UQCRFS1). This cytochrome bc1 complex then forms a dimer.</text>
</comment>
<comment type="subcellular location">
    <subcellularLocation>
        <location evidence="2">Mitochondrion inner membrane</location>
        <topology evidence="2">Multi-pass membrane protein</topology>
    </subcellularLocation>
</comment>
<comment type="miscellaneous">
    <text evidence="1">Heme 1 (or BL or b562) is low-potential and absorbs at about 562 nm, and heme 2 (or BH or b566) is high-potential and absorbs at about 566 nm.</text>
</comment>
<comment type="similarity">
    <text evidence="3 4">Belongs to the cytochrome b family.</text>
</comment>
<comment type="caution">
    <text evidence="2">The full-length protein contains only eight transmembrane helices, not nine as predicted by bioinformatics tools.</text>
</comment>